<keyword id="KW-0687">Ribonucleoprotein</keyword>
<keyword id="KW-0689">Ribosomal protein</keyword>
<proteinExistence type="inferred from homology"/>
<accession>Q0S2C1</accession>
<comment type="function">
    <text evidence="1">This protein is located at the 30S-50S ribosomal subunit interface and may play a role in the structure and function of the aminoacyl-tRNA binding site.</text>
</comment>
<comment type="similarity">
    <text evidence="1">Belongs to the bacterial ribosomal protein bL19 family.</text>
</comment>
<organism>
    <name type="scientific">Rhodococcus jostii (strain RHA1)</name>
    <dbReference type="NCBI Taxonomy" id="101510"/>
    <lineage>
        <taxon>Bacteria</taxon>
        <taxon>Bacillati</taxon>
        <taxon>Actinomycetota</taxon>
        <taxon>Actinomycetes</taxon>
        <taxon>Mycobacteriales</taxon>
        <taxon>Nocardiaceae</taxon>
        <taxon>Rhodococcus</taxon>
    </lineage>
</organism>
<gene>
    <name evidence="1" type="primary">rplS</name>
    <name type="ordered locus">RHA1_ro06542</name>
</gene>
<evidence type="ECO:0000255" key="1">
    <source>
        <dbReference type="HAMAP-Rule" id="MF_00402"/>
    </source>
</evidence>
<evidence type="ECO:0000305" key="2"/>
<name>RL19_RHOJR</name>
<dbReference type="EMBL" id="CP000431">
    <property type="protein sequence ID" value="ABG98315.1"/>
    <property type="molecule type" value="Genomic_DNA"/>
</dbReference>
<dbReference type="RefSeq" id="WP_005240490.1">
    <property type="nucleotide sequence ID" value="NC_008268.1"/>
</dbReference>
<dbReference type="SMR" id="Q0S2C1"/>
<dbReference type="GeneID" id="69890934"/>
<dbReference type="KEGG" id="rha:RHA1_ro06542"/>
<dbReference type="eggNOG" id="COG0335">
    <property type="taxonomic scope" value="Bacteria"/>
</dbReference>
<dbReference type="HOGENOM" id="CLU_103507_2_1_11"/>
<dbReference type="OrthoDB" id="9803541at2"/>
<dbReference type="Proteomes" id="UP000008710">
    <property type="component" value="Chromosome"/>
</dbReference>
<dbReference type="GO" id="GO:0022625">
    <property type="term" value="C:cytosolic large ribosomal subunit"/>
    <property type="evidence" value="ECO:0007669"/>
    <property type="project" value="TreeGrafter"/>
</dbReference>
<dbReference type="GO" id="GO:0003735">
    <property type="term" value="F:structural constituent of ribosome"/>
    <property type="evidence" value="ECO:0007669"/>
    <property type="project" value="InterPro"/>
</dbReference>
<dbReference type="GO" id="GO:0006412">
    <property type="term" value="P:translation"/>
    <property type="evidence" value="ECO:0007669"/>
    <property type="project" value="UniProtKB-UniRule"/>
</dbReference>
<dbReference type="FunFam" id="2.30.30.790:FF:000001">
    <property type="entry name" value="50S ribosomal protein L19"/>
    <property type="match status" value="1"/>
</dbReference>
<dbReference type="Gene3D" id="2.30.30.790">
    <property type="match status" value="1"/>
</dbReference>
<dbReference type="HAMAP" id="MF_00402">
    <property type="entry name" value="Ribosomal_bL19"/>
    <property type="match status" value="1"/>
</dbReference>
<dbReference type="InterPro" id="IPR001857">
    <property type="entry name" value="Ribosomal_bL19"/>
</dbReference>
<dbReference type="InterPro" id="IPR018257">
    <property type="entry name" value="Ribosomal_bL19_CS"/>
</dbReference>
<dbReference type="InterPro" id="IPR038657">
    <property type="entry name" value="Ribosomal_bL19_sf"/>
</dbReference>
<dbReference type="InterPro" id="IPR008991">
    <property type="entry name" value="Translation_prot_SH3-like_sf"/>
</dbReference>
<dbReference type="NCBIfam" id="TIGR01024">
    <property type="entry name" value="rplS_bact"/>
    <property type="match status" value="1"/>
</dbReference>
<dbReference type="PANTHER" id="PTHR15680:SF9">
    <property type="entry name" value="LARGE RIBOSOMAL SUBUNIT PROTEIN BL19M"/>
    <property type="match status" value="1"/>
</dbReference>
<dbReference type="PANTHER" id="PTHR15680">
    <property type="entry name" value="RIBOSOMAL PROTEIN L19"/>
    <property type="match status" value="1"/>
</dbReference>
<dbReference type="Pfam" id="PF01245">
    <property type="entry name" value="Ribosomal_L19"/>
    <property type="match status" value="1"/>
</dbReference>
<dbReference type="PIRSF" id="PIRSF002191">
    <property type="entry name" value="Ribosomal_L19"/>
    <property type="match status" value="1"/>
</dbReference>
<dbReference type="PRINTS" id="PR00061">
    <property type="entry name" value="RIBOSOMALL19"/>
</dbReference>
<dbReference type="SUPFAM" id="SSF50104">
    <property type="entry name" value="Translation proteins SH3-like domain"/>
    <property type="match status" value="1"/>
</dbReference>
<dbReference type="PROSITE" id="PS01015">
    <property type="entry name" value="RIBOSOMAL_L19"/>
    <property type="match status" value="1"/>
</dbReference>
<protein>
    <recommendedName>
        <fullName evidence="1">Large ribosomal subunit protein bL19</fullName>
    </recommendedName>
    <alternativeName>
        <fullName evidence="2">50S ribosomal protein L19</fullName>
    </alternativeName>
</protein>
<feature type="chain" id="PRO_0000252533" description="Large ribosomal subunit protein bL19">
    <location>
        <begin position="1"/>
        <end position="113"/>
    </location>
</feature>
<sequence>MNTLDFLDKKSLRDDIPEFRPGDTLNVHVKVIEGSKERVQVFKGVVIRRQGGGVRETFTVRKVSFGVGVERTFPVHSPNLAQIEVVTRGDVRRAKLYYLRDLRGKAAKIKEKR</sequence>
<reference key="1">
    <citation type="journal article" date="2006" name="Proc. Natl. Acad. Sci. U.S.A.">
        <title>The complete genome of Rhodococcus sp. RHA1 provides insights into a catabolic powerhouse.</title>
        <authorList>
            <person name="McLeod M.P."/>
            <person name="Warren R.L."/>
            <person name="Hsiao W.W.L."/>
            <person name="Araki N."/>
            <person name="Myhre M."/>
            <person name="Fernandes C."/>
            <person name="Miyazawa D."/>
            <person name="Wong W."/>
            <person name="Lillquist A.L."/>
            <person name="Wang D."/>
            <person name="Dosanjh M."/>
            <person name="Hara H."/>
            <person name="Petrescu A."/>
            <person name="Morin R.D."/>
            <person name="Yang G."/>
            <person name="Stott J.M."/>
            <person name="Schein J.E."/>
            <person name="Shin H."/>
            <person name="Smailus D."/>
            <person name="Siddiqui A.S."/>
            <person name="Marra M.A."/>
            <person name="Jones S.J.M."/>
            <person name="Holt R."/>
            <person name="Brinkman F.S.L."/>
            <person name="Miyauchi K."/>
            <person name="Fukuda M."/>
            <person name="Davies J.E."/>
            <person name="Mohn W.W."/>
            <person name="Eltis L.D."/>
        </authorList>
    </citation>
    <scope>NUCLEOTIDE SEQUENCE [LARGE SCALE GENOMIC DNA]</scope>
    <source>
        <strain>RHA1</strain>
    </source>
</reference>